<keyword id="KW-1185">Reference proteome</keyword>
<keyword id="KW-0964">Secreted</keyword>
<keyword id="KW-0732">Signal</keyword>
<dbReference type="EMBL" id="AC107815">
    <property type="status" value="NOT_ANNOTATED_CDS"/>
    <property type="molecule type" value="Genomic_DNA"/>
</dbReference>
<dbReference type="EMBL" id="BK000200">
    <property type="protein sequence ID" value="DAA00357.1"/>
    <property type="molecule type" value="mRNA"/>
</dbReference>
<dbReference type="CCDS" id="CCDS40176.1"/>
<dbReference type="SMR" id="Q7M742"/>
<dbReference type="FunCoup" id="Q7M742">
    <property type="interactions" value="2"/>
</dbReference>
<dbReference type="STRING" id="10090.ENSMUSP00000048722"/>
<dbReference type="iPTMnet" id="Q7M742"/>
<dbReference type="PhosphoSitePlus" id="Q7M742"/>
<dbReference type="PaxDb" id="10090-ENSMUSP00000048722"/>
<dbReference type="ProteomicsDB" id="255400"/>
<dbReference type="AGR" id="MGI:2655401"/>
<dbReference type="MGI" id="MGI:2655401">
    <property type="gene designation" value="Scgb1c1"/>
</dbReference>
<dbReference type="eggNOG" id="ENOG502SDMQ">
    <property type="taxonomic scope" value="Eukaryota"/>
</dbReference>
<dbReference type="InParanoid" id="Q7M742"/>
<dbReference type="OrthoDB" id="9069344at2759"/>
<dbReference type="PhylomeDB" id="Q7M742"/>
<dbReference type="ChiTaRS" id="Scgb1c1">
    <property type="organism name" value="mouse"/>
</dbReference>
<dbReference type="PRO" id="PR:Q7M742"/>
<dbReference type="Proteomes" id="UP000000589">
    <property type="component" value="Unplaced"/>
</dbReference>
<dbReference type="RNAct" id="Q7M742">
    <property type="molecule type" value="protein"/>
</dbReference>
<dbReference type="GO" id="GO:0005576">
    <property type="term" value="C:extracellular region"/>
    <property type="evidence" value="ECO:0007669"/>
    <property type="project" value="UniProtKB-SubCell"/>
</dbReference>
<dbReference type="Gene3D" id="1.10.210.10">
    <property type="entry name" value="Secretoglobin"/>
    <property type="match status" value="1"/>
</dbReference>
<dbReference type="InterPro" id="IPR016126">
    <property type="entry name" value="Secretoglobin"/>
</dbReference>
<dbReference type="InterPro" id="IPR043215">
    <property type="entry name" value="Secretoglobin_1C-like"/>
</dbReference>
<dbReference type="InterPro" id="IPR035960">
    <property type="entry name" value="Secretoglobin_sf"/>
</dbReference>
<dbReference type="PANTHER" id="PTHR10136">
    <property type="entry name" value="SECRETOGLOBIN FAMILY 1 MEMBER"/>
    <property type="match status" value="1"/>
</dbReference>
<dbReference type="PANTHER" id="PTHR10136:SF8">
    <property type="entry name" value="SECRETOGLOBIN FAMILY 1C MEMBER 1-RELATED"/>
    <property type="match status" value="1"/>
</dbReference>
<dbReference type="Pfam" id="PF01099">
    <property type="entry name" value="Uteroglobin"/>
    <property type="match status" value="1"/>
</dbReference>
<dbReference type="SUPFAM" id="SSF48201">
    <property type="entry name" value="Uteroglobin-like"/>
    <property type="match status" value="1"/>
</dbReference>
<dbReference type="PROSITE" id="PS51311">
    <property type="entry name" value="SCGB"/>
    <property type="match status" value="1"/>
</dbReference>
<accession>Q7M742</accession>
<protein>
    <recommendedName>
        <fullName>Secretoglobin family 1C member 1</fullName>
    </recommendedName>
    <alternativeName>
        <fullName>Secretoglobin RYD5</fullName>
    </alternativeName>
</protein>
<organism>
    <name type="scientific">Mus musculus</name>
    <name type="common">Mouse</name>
    <dbReference type="NCBI Taxonomy" id="10090"/>
    <lineage>
        <taxon>Eukaryota</taxon>
        <taxon>Metazoa</taxon>
        <taxon>Chordata</taxon>
        <taxon>Craniata</taxon>
        <taxon>Vertebrata</taxon>
        <taxon>Euteleostomi</taxon>
        <taxon>Mammalia</taxon>
        <taxon>Eutheria</taxon>
        <taxon>Euarchontoglires</taxon>
        <taxon>Glires</taxon>
        <taxon>Rodentia</taxon>
        <taxon>Myomorpha</taxon>
        <taxon>Muroidea</taxon>
        <taxon>Muridae</taxon>
        <taxon>Murinae</taxon>
        <taxon>Mus</taxon>
        <taxon>Mus</taxon>
    </lineage>
</organism>
<reference key="1">
    <citation type="journal article" date="2009" name="PLoS Biol.">
        <title>Lineage-specific biology revealed by a finished genome assembly of the mouse.</title>
        <authorList>
            <person name="Church D.M."/>
            <person name="Goodstadt L."/>
            <person name="Hillier L.W."/>
            <person name="Zody M.C."/>
            <person name="Goldstein S."/>
            <person name="She X."/>
            <person name="Bult C.J."/>
            <person name="Agarwala R."/>
            <person name="Cherry J.L."/>
            <person name="DiCuccio M."/>
            <person name="Hlavina W."/>
            <person name="Kapustin Y."/>
            <person name="Meric P."/>
            <person name="Maglott D."/>
            <person name="Birtle Z."/>
            <person name="Marques A.C."/>
            <person name="Graves T."/>
            <person name="Zhou S."/>
            <person name="Teague B."/>
            <person name="Potamousis K."/>
            <person name="Churas C."/>
            <person name="Place M."/>
            <person name="Herschleb J."/>
            <person name="Runnheim R."/>
            <person name="Forrest D."/>
            <person name="Amos-Landgraf J."/>
            <person name="Schwartz D.C."/>
            <person name="Cheng Z."/>
            <person name="Lindblad-Toh K."/>
            <person name="Eichler E.E."/>
            <person name="Ponting C.P."/>
        </authorList>
    </citation>
    <scope>NUCLEOTIDE SEQUENCE [LARGE SCALE GENOMIC DNA]</scope>
    <source>
        <strain>C57BL/6J</strain>
    </source>
</reference>
<reference key="2">
    <citation type="journal article" date="2002" name="Am. J. Respir. Crit. Care Med.">
        <title>Secretoglobins SCGB3A1 and SCGB3A2 define secretory cell subsets in mouse and human airways.</title>
        <authorList>
            <person name="Reynolds S.D."/>
            <person name="Reynolds P.R."/>
            <person name="Pryhuber G.S."/>
            <person name="Finder J.D."/>
            <person name="Stripp B.R."/>
        </authorList>
    </citation>
    <scope>IDENTIFICATION</scope>
</reference>
<feature type="signal peptide" evidence="2">
    <location>
        <begin position="1"/>
        <end position="23"/>
    </location>
</feature>
<feature type="chain" id="PRO_0000223336" description="Secretoglobin family 1C member 1">
    <location>
        <begin position="24"/>
        <end position="95"/>
    </location>
</feature>
<evidence type="ECO:0000250" key="1"/>
<evidence type="ECO:0000255" key="2"/>
<evidence type="ECO:0000305" key="3"/>
<gene>
    <name type="primary">Scgb1c1</name>
    <name type="synonym">Ryd5</name>
</gene>
<name>SG1C1_MOUSE</name>
<comment type="subcellular location">
    <subcellularLocation>
        <location evidence="1">Secreted</location>
    </subcellularLocation>
</comment>
<comment type="similarity">
    <text evidence="3">Belongs to the secretoglobin family.</text>
</comment>
<sequence length="95" mass="10571">MKGSSALLLVALSLLCVCGLTRAEDDNEFFMEFLQTLLVGTPEELYEGPLGKYNVNDMAKSALRELKSCIDELQPVHKEQLVKLLVQVLDAQEDT</sequence>
<proteinExistence type="inferred from homology"/>